<sequence>MVLSQKLHEAFKGTVERITGPRTISAFKEKGVLSVSEFVLAGDNLVSKCPTWSWESGDASKRKPYLPSDKQFLITRNVPCLRRAASVAEDYEAAGGEVLVDDEDNDGWLATHGKPKDKGKEEDNLPSMDALDINEKNTIQSIPTYFGGEEDDDIPDMEEFDEADNVVENDPATLQSTYLVAHEPDDDNILRTRTYDLSITYDKYYQTPRVWLTGYDESRMLLQPELVMEDVSQDHARKTVTIEDHPHLPGKHASVHPCRHGAVMKKIIDVLMSRGVEPEVDKYLFLFLKFMASVIPTIEYDYTMDFDLGSSST</sequence>
<gene>
    <name type="primary">ATG3</name>
    <name type="synonym">APG3</name>
    <name type="ordered locus">At5g61500</name>
    <name type="ORF">K11J9.3</name>
</gene>
<accession>Q0WWQ1</accession>
<accession>Q8L982</accession>
<accession>Q8S930</accession>
<accession>Q9FKG9</accession>
<feature type="chain" id="PRO_0000286937" description="Autophagy-related protein 3">
    <location>
        <begin position="1"/>
        <end position="313"/>
    </location>
</feature>
<feature type="region of interest" description="Disordered" evidence="3">
    <location>
        <begin position="103"/>
        <end position="125"/>
    </location>
</feature>
<feature type="compositionally biased region" description="Basic and acidic residues" evidence="3">
    <location>
        <begin position="114"/>
        <end position="123"/>
    </location>
</feature>
<feature type="active site" description="Glycyl thioester intermediate" evidence="2">
    <location>
        <position position="258"/>
    </location>
</feature>
<feature type="sequence conflict" description="In Ref. 5; BAE98447." evidence="4" ref="5">
    <original>K</original>
    <variation>E</variation>
    <location>
        <position position="203"/>
    </location>
</feature>
<feature type="helix" evidence="5">
    <location>
        <begin position="26"/>
        <end position="30"/>
    </location>
</feature>
<feature type="helix" evidence="5">
    <location>
        <begin position="35"/>
        <end position="48"/>
    </location>
</feature>
<feature type="strand" evidence="5">
    <location>
        <begin position="53"/>
        <end position="55"/>
    </location>
</feature>
<feature type="helix" evidence="5">
    <location>
        <begin position="59"/>
        <end position="61"/>
    </location>
</feature>
<feature type="strand" evidence="5">
    <location>
        <begin position="71"/>
        <end position="80"/>
    </location>
</feature>
<feature type="strand" evidence="5">
    <location>
        <begin position="193"/>
        <end position="202"/>
    </location>
</feature>
<feature type="turn" evidence="5">
    <location>
        <begin position="203"/>
        <end position="206"/>
    </location>
</feature>
<feature type="strand" evidence="5">
    <location>
        <begin position="207"/>
        <end position="215"/>
    </location>
</feature>
<feature type="helix" evidence="5">
    <location>
        <begin position="224"/>
        <end position="229"/>
    </location>
</feature>
<feature type="strand" evidence="5">
    <location>
        <begin position="240"/>
        <end position="244"/>
    </location>
</feature>
<feature type="strand" evidence="5">
    <location>
        <begin position="246"/>
        <end position="255"/>
    </location>
</feature>
<feature type="helix" evidence="5">
    <location>
        <begin position="257"/>
        <end position="259"/>
    </location>
</feature>
<feature type="helix" evidence="5">
    <location>
        <begin position="260"/>
        <end position="274"/>
    </location>
</feature>
<feature type="helix" evidence="5">
    <location>
        <begin position="280"/>
        <end position="282"/>
    </location>
</feature>
<feature type="helix" evidence="5">
    <location>
        <begin position="283"/>
        <end position="291"/>
    </location>
</feature>
<feature type="turn" evidence="5">
    <location>
        <begin position="292"/>
        <end position="294"/>
    </location>
</feature>
<reference key="1">
    <citation type="journal article" date="2002" name="Plant Physiol.">
        <title>Leaf senescence and starvation-induced chlorosis are accelerated by the disruption of an Arabidopsis autophagy gene.</title>
        <authorList>
            <person name="Hanaoka H."/>
            <person name="Noda T."/>
            <person name="Shirano Y."/>
            <person name="Kato T."/>
            <person name="Hayashi H."/>
            <person name="Shibata D."/>
            <person name="Tabata S."/>
            <person name="Ohsumi Y."/>
        </authorList>
    </citation>
    <scope>NUCLEOTIDE SEQUENCE [MRNA]</scope>
    <scope>NOMENCLATURE</scope>
    <scope>GENE FAMILY</scope>
</reference>
<reference key="2">
    <citation type="journal article" date="1998" name="DNA Res.">
        <title>Structural analysis of Arabidopsis thaliana chromosome 5. VI. Sequence features of the regions of 1,367,185 bp covered by 19 physically assigned P1 and TAC clones.</title>
        <authorList>
            <person name="Kotani H."/>
            <person name="Nakamura Y."/>
            <person name="Sato S."/>
            <person name="Asamizu E."/>
            <person name="Kaneko T."/>
            <person name="Miyajima N."/>
            <person name="Tabata S."/>
        </authorList>
    </citation>
    <scope>NUCLEOTIDE SEQUENCE [LARGE SCALE GENOMIC DNA]</scope>
    <source>
        <strain>cv. Columbia</strain>
    </source>
</reference>
<reference key="3">
    <citation type="journal article" date="2017" name="Plant J.">
        <title>Araport11: a complete reannotation of the Arabidopsis thaliana reference genome.</title>
        <authorList>
            <person name="Cheng C.Y."/>
            <person name="Krishnakumar V."/>
            <person name="Chan A.P."/>
            <person name="Thibaud-Nissen F."/>
            <person name="Schobel S."/>
            <person name="Town C.D."/>
        </authorList>
    </citation>
    <scope>GENOME REANNOTATION</scope>
    <source>
        <strain>cv. Columbia</strain>
    </source>
</reference>
<reference key="4">
    <citation type="submission" date="2006-03" db="EMBL/GenBank/DDBJ databases">
        <title>Arabidopsis ORF clones.</title>
        <authorList>
            <person name="Shinn P."/>
            <person name="Chen H."/>
            <person name="Kim C.J."/>
            <person name="Ecker J.R."/>
        </authorList>
    </citation>
    <scope>NUCLEOTIDE SEQUENCE [LARGE SCALE MRNA]</scope>
    <source>
        <strain>cv. Columbia</strain>
    </source>
</reference>
<reference key="5">
    <citation type="submission" date="2006-07" db="EMBL/GenBank/DDBJ databases">
        <title>Large-scale analysis of RIKEN Arabidopsis full-length (RAFL) cDNAs.</title>
        <authorList>
            <person name="Totoki Y."/>
            <person name="Seki M."/>
            <person name="Ishida J."/>
            <person name="Nakajima M."/>
            <person name="Enju A."/>
            <person name="Kamiya A."/>
            <person name="Narusaka M."/>
            <person name="Shin-i T."/>
            <person name="Nakagawa M."/>
            <person name="Sakamoto N."/>
            <person name="Oishi K."/>
            <person name="Kohara Y."/>
            <person name="Kobayashi M."/>
            <person name="Toyoda A."/>
            <person name="Sakaki Y."/>
            <person name="Sakurai T."/>
            <person name="Iida K."/>
            <person name="Akiyama K."/>
            <person name="Satou M."/>
            <person name="Toyoda T."/>
            <person name="Konagaya A."/>
            <person name="Carninci P."/>
            <person name="Kawai J."/>
            <person name="Hayashizaki Y."/>
            <person name="Shinozaki K."/>
        </authorList>
    </citation>
    <scope>NUCLEOTIDE SEQUENCE [LARGE SCALE MRNA]</scope>
    <source>
        <strain>cv. Columbia</strain>
    </source>
</reference>
<reference key="6">
    <citation type="submission" date="2002-03" db="EMBL/GenBank/DDBJ databases">
        <title>Full-length cDNA from Arabidopsis thaliana.</title>
        <authorList>
            <person name="Brover V.V."/>
            <person name="Troukhan M.E."/>
            <person name="Alexandrov N.A."/>
            <person name="Lu Y.-P."/>
            <person name="Flavell R.B."/>
            <person name="Feldmann K.A."/>
        </authorList>
    </citation>
    <scope>NUCLEOTIDE SEQUENCE [LARGE SCALE MRNA]</scope>
</reference>
<keyword id="KW-0002">3D-structure</keyword>
<keyword id="KW-0072">Autophagy</keyword>
<keyword id="KW-0963">Cytoplasm</keyword>
<keyword id="KW-0653">Protein transport</keyword>
<keyword id="KW-1185">Reference proteome</keyword>
<keyword id="KW-0813">Transport</keyword>
<keyword id="KW-0833">Ubl conjugation pathway</keyword>
<organism>
    <name type="scientific">Arabidopsis thaliana</name>
    <name type="common">Mouse-ear cress</name>
    <dbReference type="NCBI Taxonomy" id="3702"/>
    <lineage>
        <taxon>Eukaryota</taxon>
        <taxon>Viridiplantae</taxon>
        <taxon>Streptophyta</taxon>
        <taxon>Embryophyta</taxon>
        <taxon>Tracheophyta</taxon>
        <taxon>Spermatophyta</taxon>
        <taxon>Magnoliopsida</taxon>
        <taxon>eudicotyledons</taxon>
        <taxon>Gunneridae</taxon>
        <taxon>Pentapetalae</taxon>
        <taxon>rosids</taxon>
        <taxon>malvids</taxon>
        <taxon>Brassicales</taxon>
        <taxon>Brassicaceae</taxon>
        <taxon>Camelineae</taxon>
        <taxon>Arabidopsis</taxon>
    </lineage>
</organism>
<proteinExistence type="evidence at protein level"/>
<comment type="function">
    <text>E2 conjugating enzyme responsible for the E2-like covalent binding of phosphatidylethanolamine to the C-terminal Gly of ATG8. This step is required for the membrane association of ATG8. The formation of the ATG8-phosphatidylethanolamine conjugate is essential for autophagy and for the cytoplasm to vacuole transport (Cvt).</text>
</comment>
<comment type="subunit">
    <text evidence="1">Interacts with ATG8 through an intermediate thioester bond between Cys-258 and the C-terminal Gly of ATG8. Also interacts with the C-terminal region of the E1-like ATG7 enzyme (By similarity).</text>
</comment>
<comment type="interaction">
    <interactant intactId="EBI-8276607">
        <id>Q0WWQ1</id>
    </interactant>
    <interactant intactId="EBI-8276588">
        <id>Q9LVK3</id>
        <label>ATG12B</label>
    </interactant>
    <organismsDiffer>false</organismsDiffer>
    <experiments>2</experiments>
</comment>
<comment type="subcellular location">
    <subcellularLocation>
        <location evidence="4">Cytoplasm</location>
    </subcellularLocation>
</comment>
<comment type="similarity">
    <text evidence="4">Belongs to the ATG3 family.</text>
</comment>
<comment type="sequence caution" evidence="4">
    <conflict type="erroneous gene model prediction">
        <sequence resource="EMBL-CDS" id="BAB08995"/>
    </conflict>
</comment>
<evidence type="ECO:0000250" key="1"/>
<evidence type="ECO:0000255" key="2"/>
<evidence type="ECO:0000256" key="3">
    <source>
        <dbReference type="SAM" id="MobiDB-lite"/>
    </source>
</evidence>
<evidence type="ECO:0000305" key="4"/>
<evidence type="ECO:0007829" key="5">
    <source>
        <dbReference type="PDB" id="3VX8"/>
    </source>
</evidence>
<protein>
    <recommendedName>
        <fullName>Autophagy-related protein 3</fullName>
    </recommendedName>
    <alternativeName>
        <fullName>Autophagy-related E2-like conjugation enzyme ATG3</fullName>
        <shortName>AtAPG3</shortName>
        <shortName>Protein autophagy 3</shortName>
    </alternativeName>
</protein>
<name>ATG3_ARATH</name>
<dbReference type="EMBL" id="AB073170">
    <property type="protein sequence ID" value="BAB88382.1"/>
    <property type="molecule type" value="mRNA"/>
</dbReference>
<dbReference type="EMBL" id="AB012239">
    <property type="protein sequence ID" value="BAB08995.1"/>
    <property type="status" value="ALT_SEQ"/>
    <property type="molecule type" value="Genomic_DNA"/>
</dbReference>
<dbReference type="EMBL" id="CP002688">
    <property type="protein sequence ID" value="AED97476.1"/>
    <property type="molecule type" value="Genomic_DNA"/>
</dbReference>
<dbReference type="EMBL" id="BT024713">
    <property type="protein sequence ID" value="ABD59051.1"/>
    <property type="molecule type" value="mRNA"/>
</dbReference>
<dbReference type="EMBL" id="AK226290">
    <property type="protein sequence ID" value="BAE98447.1"/>
    <property type="molecule type" value="mRNA"/>
</dbReference>
<dbReference type="EMBL" id="AY088587">
    <property type="protein sequence ID" value="AAM66117.1"/>
    <property type="molecule type" value="mRNA"/>
</dbReference>
<dbReference type="RefSeq" id="NP_568934.1">
    <property type="nucleotide sequence ID" value="NM_125543.5"/>
</dbReference>
<dbReference type="PDB" id="3VX8">
    <property type="method" value="X-ray"/>
    <property type="resolution" value="3.11 A"/>
    <property type="chains" value="B/C=26-313"/>
</dbReference>
<dbReference type="PDB" id="7EU4">
    <property type="method" value="X-ray"/>
    <property type="resolution" value="3.20 A"/>
    <property type="chains" value="O/P/Q/R=152-162"/>
</dbReference>
<dbReference type="PDBsum" id="3VX8"/>
<dbReference type="PDBsum" id="7EU4"/>
<dbReference type="SMR" id="Q0WWQ1"/>
<dbReference type="BioGRID" id="21515">
    <property type="interactions" value="3"/>
</dbReference>
<dbReference type="FunCoup" id="Q0WWQ1">
    <property type="interactions" value="4774"/>
</dbReference>
<dbReference type="IntAct" id="Q0WWQ1">
    <property type="interactions" value="1"/>
</dbReference>
<dbReference type="MINT" id="Q0WWQ1"/>
<dbReference type="STRING" id="3702.Q0WWQ1"/>
<dbReference type="TCDB" id="9.A.15.3.1">
    <property type="family name" value="the autophagy-related phagophore-formation transporter (apt) family"/>
</dbReference>
<dbReference type="PaxDb" id="3702-AT5G61500.1"/>
<dbReference type="ProteomicsDB" id="246736"/>
<dbReference type="DNASU" id="836271"/>
<dbReference type="EnsemblPlants" id="AT5G61500.1">
    <property type="protein sequence ID" value="AT5G61500.1"/>
    <property type="gene ID" value="AT5G61500"/>
</dbReference>
<dbReference type="GeneID" id="836271"/>
<dbReference type="Gramene" id="AT5G61500.1">
    <property type="protein sequence ID" value="AT5G61500.1"/>
    <property type="gene ID" value="AT5G61500"/>
</dbReference>
<dbReference type="KEGG" id="ath:AT5G61500"/>
<dbReference type="Araport" id="AT5G61500"/>
<dbReference type="TAIR" id="AT5G61500">
    <property type="gene designation" value="ATG3"/>
</dbReference>
<dbReference type="eggNOG" id="KOG2981">
    <property type="taxonomic scope" value="Eukaryota"/>
</dbReference>
<dbReference type="HOGENOM" id="CLU_027518_0_0_1"/>
<dbReference type="InParanoid" id="Q0WWQ1"/>
<dbReference type="OMA" id="HCPTWSW"/>
<dbReference type="PhylomeDB" id="Q0WWQ1"/>
<dbReference type="EvolutionaryTrace" id="Q0WWQ1"/>
<dbReference type="PRO" id="PR:Q0WWQ1"/>
<dbReference type="Proteomes" id="UP000006548">
    <property type="component" value="Chromosome 5"/>
</dbReference>
<dbReference type="ExpressionAtlas" id="Q0WWQ1">
    <property type="expression patterns" value="baseline and differential"/>
</dbReference>
<dbReference type="GO" id="GO:0005737">
    <property type="term" value="C:cytoplasm"/>
    <property type="evidence" value="ECO:0007669"/>
    <property type="project" value="UniProtKB-SubCell"/>
</dbReference>
<dbReference type="GO" id="GO:0019787">
    <property type="term" value="F:ubiquitin-like protein transferase activity"/>
    <property type="evidence" value="ECO:0007669"/>
    <property type="project" value="InterPro"/>
</dbReference>
<dbReference type="GO" id="GO:0006914">
    <property type="term" value="P:autophagy"/>
    <property type="evidence" value="ECO:0007669"/>
    <property type="project" value="UniProtKB-KW"/>
</dbReference>
<dbReference type="GO" id="GO:0015031">
    <property type="term" value="P:protein transport"/>
    <property type="evidence" value="ECO:0007669"/>
    <property type="project" value="UniProtKB-KW"/>
</dbReference>
<dbReference type="FunFam" id="3.30.1460.50:FF:000007">
    <property type="entry name" value="Autophagy-related protein 3"/>
    <property type="match status" value="1"/>
</dbReference>
<dbReference type="Gene3D" id="3.30.1460.50">
    <property type="match status" value="1"/>
</dbReference>
<dbReference type="InterPro" id="IPR007135">
    <property type="entry name" value="Atg3/Atg10"/>
</dbReference>
<dbReference type="PANTHER" id="PTHR12866">
    <property type="entry name" value="UBIQUITIN-LIKE-CONJUGATING ENZYME ATG3"/>
    <property type="match status" value="1"/>
</dbReference>
<dbReference type="PANTHER" id="PTHR12866:SF2">
    <property type="entry name" value="UBIQUITIN-LIKE-CONJUGATING ENZYME ATG3"/>
    <property type="match status" value="1"/>
</dbReference>
<dbReference type="Pfam" id="PF03987">
    <property type="entry name" value="Autophagy_act_C"/>
    <property type="match status" value="1"/>
</dbReference>